<dbReference type="EC" id="2.4.2.21" evidence="1"/>
<dbReference type="EMBL" id="AM933172">
    <property type="protein sequence ID" value="CAR33594.1"/>
    <property type="molecule type" value="Genomic_DNA"/>
</dbReference>
<dbReference type="RefSeq" id="WP_001193983.1">
    <property type="nucleotide sequence ID" value="NC_011294.1"/>
</dbReference>
<dbReference type="SMR" id="B5QYX3"/>
<dbReference type="KEGG" id="set:SEN2014"/>
<dbReference type="HOGENOM" id="CLU_002982_0_0_6"/>
<dbReference type="UniPathway" id="UPA00061">
    <property type="reaction ID" value="UER00516"/>
</dbReference>
<dbReference type="Proteomes" id="UP000000613">
    <property type="component" value="Chromosome"/>
</dbReference>
<dbReference type="GO" id="GO:0008939">
    <property type="term" value="F:nicotinate-nucleotide-dimethylbenzimidazole phosphoribosyltransferase activity"/>
    <property type="evidence" value="ECO:0007669"/>
    <property type="project" value="UniProtKB-UniRule"/>
</dbReference>
<dbReference type="GO" id="GO:0009236">
    <property type="term" value="P:cobalamin biosynthetic process"/>
    <property type="evidence" value="ECO:0007669"/>
    <property type="project" value="UniProtKB-KW"/>
</dbReference>
<dbReference type="CDD" id="cd02439">
    <property type="entry name" value="DMB-PRT_CobT"/>
    <property type="match status" value="1"/>
</dbReference>
<dbReference type="FunFam" id="1.10.1610.10:FF:000001">
    <property type="entry name" value="Nicotinate-nucleotide--dimethylbenzimidazole phosphoribosyltransferase"/>
    <property type="match status" value="1"/>
</dbReference>
<dbReference type="FunFam" id="3.40.50.10210:FF:000001">
    <property type="entry name" value="Nicotinate-nucleotide--dimethylbenzimidazole phosphoribosyltransferase"/>
    <property type="match status" value="1"/>
</dbReference>
<dbReference type="Gene3D" id="1.10.1610.10">
    <property type="match status" value="1"/>
</dbReference>
<dbReference type="Gene3D" id="3.40.50.10210">
    <property type="match status" value="1"/>
</dbReference>
<dbReference type="HAMAP" id="MF_00230">
    <property type="entry name" value="CobT"/>
    <property type="match status" value="1"/>
</dbReference>
<dbReference type="InterPro" id="IPR003200">
    <property type="entry name" value="Nict_dMeBzImd_PRibTrfase"/>
</dbReference>
<dbReference type="InterPro" id="IPR017846">
    <property type="entry name" value="Nict_dMeBzImd_PRibTrfase_bact"/>
</dbReference>
<dbReference type="InterPro" id="IPR023195">
    <property type="entry name" value="Nict_dMeBzImd_PRibTrfase_N"/>
</dbReference>
<dbReference type="InterPro" id="IPR036087">
    <property type="entry name" value="Nict_dMeBzImd_PRibTrfase_sf"/>
</dbReference>
<dbReference type="NCBIfam" id="TIGR03160">
    <property type="entry name" value="cobT_DBIPRT"/>
    <property type="match status" value="1"/>
</dbReference>
<dbReference type="NCBIfam" id="NF000996">
    <property type="entry name" value="PRK00105.1"/>
    <property type="match status" value="1"/>
</dbReference>
<dbReference type="PANTHER" id="PTHR43463">
    <property type="entry name" value="NICOTINATE-NUCLEOTIDE--DIMETHYLBENZIMIDAZOLE PHOSPHORIBOSYLTRANSFERASE"/>
    <property type="match status" value="1"/>
</dbReference>
<dbReference type="PANTHER" id="PTHR43463:SF1">
    <property type="entry name" value="NICOTINATE-NUCLEOTIDE--DIMETHYLBENZIMIDAZOLE PHOSPHORIBOSYLTRANSFERASE"/>
    <property type="match status" value="1"/>
</dbReference>
<dbReference type="Pfam" id="PF02277">
    <property type="entry name" value="DBI_PRT"/>
    <property type="match status" value="1"/>
</dbReference>
<dbReference type="SUPFAM" id="SSF52733">
    <property type="entry name" value="Nicotinate mononucleotide:5,6-dimethylbenzimidazole phosphoribosyltransferase (CobT)"/>
    <property type="match status" value="1"/>
</dbReference>
<comment type="function">
    <text evidence="1">Catalyzes the synthesis of alpha-ribazole-5'-phosphate from nicotinate mononucleotide (NAMN) and 5,6-dimethylbenzimidazole (DMB).</text>
</comment>
<comment type="catalytic activity">
    <reaction evidence="1">
        <text>5,6-dimethylbenzimidazole + nicotinate beta-D-ribonucleotide = alpha-ribazole 5'-phosphate + nicotinate + H(+)</text>
        <dbReference type="Rhea" id="RHEA:11196"/>
        <dbReference type="ChEBI" id="CHEBI:15378"/>
        <dbReference type="ChEBI" id="CHEBI:15890"/>
        <dbReference type="ChEBI" id="CHEBI:32544"/>
        <dbReference type="ChEBI" id="CHEBI:57502"/>
        <dbReference type="ChEBI" id="CHEBI:57918"/>
        <dbReference type="EC" id="2.4.2.21"/>
    </reaction>
</comment>
<comment type="pathway">
    <text evidence="1">Nucleoside biosynthesis; alpha-ribazole biosynthesis; alpha-ribazole from 5,6-dimethylbenzimidazole: step 1/2.</text>
</comment>
<comment type="subunit">
    <text evidence="1">Homodimer.</text>
</comment>
<comment type="similarity">
    <text evidence="1">Belongs to the CobT family.</text>
</comment>
<gene>
    <name evidence="1" type="primary">cobT</name>
    <name type="ordered locus">SEN2014</name>
</gene>
<name>COBT_SALEP</name>
<reference key="1">
    <citation type="journal article" date="2008" name="Genome Res.">
        <title>Comparative genome analysis of Salmonella enteritidis PT4 and Salmonella gallinarum 287/91 provides insights into evolutionary and host adaptation pathways.</title>
        <authorList>
            <person name="Thomson N.R."/>
            <person name="Clayton D.J."/>
            <person name="Windhorst D."/>
            <person name="Vernikos G."/>
            <person name="Davidson S."/>
            <person name="Churcher C."/>
            <person name="Quail M.A."/>
            <person name="Stevens M."/>
            <person name="Jones M.A."/>
            <person name="Watson M."/>
            <person name="Barron A."/>
            <person name="Layton A."/>
            <person name="Pickard D."/>
            <person name="Kingsley R.A."/>
            <person name="Bignell A."/>
            <person name="Clark L."/>
            <person name="Harris B."/>
            <person name="Ormond D."/>
            <person name="Abdellah Z."/>
            <person name="Brooks K."/>
            <person name="Cherevach I."/>
            <person name="Chillingworth T."/>
            <person name="Woodward J."/>
            <person name="Norberczak H."/>
            <person name="Lord A."/>
            <person name="Arrowsmith C."/>
            <person name="Jagels K."/>
            <person name="Moule S."/>
            <person name="Mungall K."/>
            <person name="Saunders M."/>
            <person name="Whitehead S."/>
            <person name="Chabalgoity J.A."/>
            <person name="Maskell D."/>
            <person name="Humphreys T."/>
            <person name="Roberts M."/>
            <person name="Barrow P.A."/>
            <person name="Dougan G."/>
            <person name="Parkhill J."/>
        </authorList>
    </citation>
    <scope>NUCLEOTIDE SEQUENCE [LARGE SCALE GENOMIC DNA]</scope>
    <source>
        <strain>P125109</strain>
    </source>
</reference>
<sequence>MQTLHALLRDIPAPDAEAMARAQQHIDGLLKPPGSLGRLETLAVQLAGMPGLNGTPQVGEKAVLVMCADHGVWDEGVAVSPKIVTAIQAANMTRGTTGVCVLAAQAGAKVHVIDVGIDAEPIPGVVNMRVARGCGNIAVGPAMSRLQAEALLLEVSRYTCDLAQRGVTLFGVGELGMANTTPAAAMVSVFTGSDAKEVVGIGANLPPSRIDNKVDVVRRAIAINQPNPRDGIDVLSKVGGFDLVGMTGVMLGAARCGLPVLLDGFLSYSAALAACQIAPAVRPYLIPSHFSAEKGARIALAHLSMEPYLHMAMRLGEGSGAALAMPIVEAACAMFHNMGELAASNIVLPEGNANAT</sequence>
<evidence type="ECO:0000255" key="1">
    <source>
        <dbReference type="HAMAP-Rule" id="MF_00230"/>
    </source>
</evidence>
<proteinExistence type="inferred from homology"/>
<protein>
    <recommendedName>
        <fullName evidence="1">Nicotinate-nucleotide--dimethylbenzimidazole phosphoribosyltransferase</fullName>
        <shortName evidence="1">NN:DBI PRT</shortName>
        <ecNumber evidence="1">2.4.2.21</ecNumber>
    </recommendedName>
    <alternativeName>
        <fullName evidence="1">N(1)-alpha-phosphoribosyltransferase</fullName>
    </alternativeName>
</protein>
<accession>B5QYX3</accession>
<feature type="chain" id="PRO_1000100475" description="Nicotinate-nucleotide--dimethylbenzimidazole phosphoribosyltransferase">
    <location>
        <begin position="1"/>
        <end position="356"/>
    </location>
</feature>
<feature type="active site" description="Proton acceptor" evidence="1">
    <location>
        <position position="317"/>
    </location>
</feature>
<organism>
    <name type="scientific">Salmonella enteritidis PT4 (strain P125109)</name>
    <dbReference type="NCBI Taxonomy" id="550537"/>
    <lineage>
        <taxon>Bacteria</taxon>
        <taxon>Pseudomonadati</taxon>
        <taxon>Pseudomonadota</taxon>
        <taxon>Gammaproteobacteria</taxon>
        <taxon>Enterobacterales</taxon>
        <taxon>Enterobacteriaceae</taxon>
        <taxon>Salmonella</taxon>
    </lineage>
</organism>
<keyword id="KW-0169">Cobalamin biosynthesis</keyword>
<keyword id="KW-0328">Glycosyltransferase</keyword>
<keyword id="KW-0808">Transferase</keyword>